<name>MCSB_BACAA</name>
<evidence type="ECO:0000255" key="1">
    <source>
        <dbReference type="HAMAP-Rule" id="MF_00602"/>
    </source>
</evidence>
<organism>
    <name type="scientific">Bacillus anthracis (strain A0248)</name>
    <dbReference type="NCBI Taxonomy" id="592021"/>
    <lineage>
        <taxon>Bacteria</taxon>
        <taxon>Bacillati</taxon>
        <taxon>Bacillota</taxon>
        <taxon>Bacilli</taxon>
        <taxon>Bacillales</taxon>
        <taxon>Bacillaceae</taxon>
        <taxon>Bacillus</taxon>
        <taxon>Bacillus cereus group</taxon>
    </lineage>
</organism>
<dbReference type="EC" id="2.7.14.1" evidence="1"/>
<dbReference type="EMBL" id="CP001598">
    <property type="protein sequence ID" value="ACQ48133.1"/>
    <property type="molecule type" value="Genomic_DNA"/>
</dbReference>
<dbReference type="RefSeq" id="WP_000050832.1">
    <property type="nucleotide sequence ID" value="NC_012659.1"/>
</dbReference>
<dbReference type="SMR" id="C3P9M6"/>
<dbReference type="GeneID" id="45020125"/>
<dbReference type="KEGG" id="bai:BAA_0096"/>
<dbReference type="HOGENOM" id="CLU_066591_1_0_9"/>
<dbReference type="GO" id="GO:0005615">
    <property type="term" value="C:extracellular space"/>
    <property type="evidence" value="ECO:0007669"/>
    <property type="project" value="TreeGrafter"/>
</dbReference>
<dbReference type="GO" id="GO:0005524">
    <property type="term" value="F:ATP binding"/>
    <property type="evidence" value="ECO:0007669"/>
    <property type="project" value="UniProtKB-KW"/>
</dbReference>
<dbReference type="GO" id="GO:0004111">
    <property type="term" value="F:creatine kinase activity"/>
    <property type="evidence" value="ECO:0007669"/>
    <property type="project" value="InterPro"/>
</dbReference>
<dbReference type="GO" id="GO:0004672">
    <property type="term" value="F:protein kinase activity"/>
    <property type="evidence" value="ECO:0007669"/>
    <property type="project" value="UniProtKB-UniRule"/>
</dbReference>
<dbReference type="GO" id="GO:0046314">
    <property type="term" value="P:phosphocreatine biosynthetic process"/>
    <property type="evidence" value="ECO:0007669"/>
    <property type="project" value="InterPro"/>
</dbReference>
<dbReference type="CDD" id="cd07930">
    <property type="entry name" value="bacterial_phosphagen_kinase"/>
    <property type="match status" value="1"/>
</dbReference>
<dbReference type="FunFam" id="3.30.590.10:FF:000007">
    <property type="entry name" value="Protein-arginine kinase"/>
    <property type="match status" value="1"/>
</dbReference>
<dbReference type="Gene3D" id="3.30.590.10">
    <property type="entry name" value="Glutamine synthetase/guanido kinase, catalytic domain"/>
    <property type="match status" value="1"/>
</dbReference>
<dbReference type="HAMAP" id="MF_00602">
    <property type="entry name" value="Prot_Arg_kinase"/>
    <property type="match status" value="1"/>
</dbReference>
<dbReference type="InterPro" id="IPR023660">
    <property type="entry name" value="Arg_Kinase"/>
</dbReference>
<dbReference type="InterPro" id="IPR000749">
    <property type="entry name" value="ATP-guanido_PTrfase"/>
</dbReference>
<dbReference type="InterPro" id="IPR022415">
    <property type="entry name" value="ATP-guanido_PTrfase_AS"/>
</dbReference>
<dbReference type="InterPro" id="IPR022414">
    <property type="entry name" value="ATP-guanido_PTrfase_cat"/>
</dbReference>
<dbReference type="InterPro" id="IPR014746">
    <property type="entry name" value="Gln_synth/guanido_kin_cat_dom"/>
</dbReference>
<dbReference type="NCBIfam" id="NF002194">
    <property type="entry name" value="PRK01059.1-4"/>
    <property type="match status" value="1"/>
</dbReference>
<dbReference type="NCBIfam" id="NF002195">
    <property type="entry name" value="PRK01059.1-5"/>
    <property type="match status" value="1"/>
</dbReference>
<dbReference type="PANTHER" id="PTHR11547:SF38">
    <property type="entry name" value="ARGININE KINASE 1-RELATED"/>
    <property type="match status" value="1"/>
</dbReference>
<dbReference type="PANTHER" id="PTHR11547">
    <property type="entry name" value="ARGININE OR CREATINE KINASE"/>
    <property type="match status" value="1"/>
</dbReference>
<dbReference type="Pfam" id="PF00217">
    <property type="entry name" value="ATP-gua_Ptrans"/>
    <property type="match status" value="1"/>
</dbReference>
<dbReference type="SUPFAM" id="SSF55931">
    <property type="entry name" value="Glutamine synthetase/guanido kinase"/>
    <property type="match status" value="1"/>
</dbReference>
<dbReference type="PROSITE" id="PS00112">
    <property type="entry name" value="PHOSPHAGEN_KINASE"/>
    <property type="match status" value="1"/>
</dbReference>
<dbReference type="PROSITE" id="PS51510">
    <property type="entry name" value="PHOSPHAGEN_KINASE_C"/>
    <property type="match status" value="1"/>
</dbReference>
<keyword id="KW-0021">Allosteric enzyme</keyword>
<keyword id="KW-0067">ATP-binding</keyword>
<keyword id="KW-0418">Kinase</keyword>
<keyword id="KW-0547">Nucleotide-binding</keyword>
<keyword id="KW-0808">Transferase</keyword>
<reference key="1">
    <citation type="submission" date="2009-04" db="EMBL/GenBank/DDBJ databases">
        <title>Genome sequence of Bacillus anthracis A0248.</title>
        <authorList>
            <person name="Dodson R.J."/>
            <person name="Munk A.C."/>
            <person name="Bruce D."/>
            <person name="Detter C."/>
            <person name="Tapia R."/>
            <person name="Sutton G."/>
            <person name="Sims D."/>
            <person name="Brettin T."/>
        </authorList>
    </citation>
    <scope>NUCLEOTIDE SEQUENCE [LARGE SCALE GENOMIC DNA]</scope>
    <source>
        <strain>A0248</strain>
    </source>
</reference>
<protein>
    <recommendedName>
        <fullName evidence="1">Protein-arginine kinase</fullName>
        <ecNumber evidence="1">2.7.14.1</ecNumber>
    </recommendedName>
</protein>
<accession>C3P9M6</accession>
<proteinExistence type="inferred from homology"/>
<gene>
    <name evidence="1" type="primary">mcsB</name>
    <name type="ordered locus">BAA_0096</name>
</gene>
<comment type="function">
    <text evidence="1">Catalyzes the specific phosphorylation of arginine residues in a large number of proteins. Is part of the bacterial stress response system. Protein arginine phosphorylation has a physiologically important role and is involved in the regulation of many critical cellular processes, such as protein homeostasis, motility, competence, and stringent and stress responses, by regulating gene expression and protein activity.</text>
</comment>
<comment type="catalytic activity">
    <reaction evidence="1">
        <text>L-arginyl-[protein] + ATP = N(omega)-phospho-L-arginyl-[protein] + ADP + H(+)</text>
        <dbReference type="Rhea" id="RHEA:43384"/>
        <dbReference type="Rhea" id="RHEA-COMP:10532"/>
        <dbReference type="Rhea" id="RHEA-COMP:10533"/>
        <dbReference type="ChEBI" id="CHEBI:15378"/>
        <dbReference type="ChEBI" id="CHEBI:29965"/>
        <dbReference type="ChEBI" id="CHEBI:30616"/>
        <dbReference type="ChEBI" id="CHEBI:83226"/>
        <dbReference type="ChEBI" id="CHEBI:456216"/>
        <dbReference type="EC" id="2.7.14.1"/>
    </reaction>
</comment>
<comment type="activity regulation">
    <text evidence="1">Appears to be allosterically activated by the binding of pArg-containing polypeptides to the pArg-binding pocket localized in the C-terminal domain of McsB.</text>
</comment>
<comment type="similarity">
    <text evidence="1">Belongs to the ATP:guanido phosphotransferase family.</text>
</comment>
<feature type="chain" id="PRO_1000147056" description="Protein-arginine kinase">
    <location>
        <begin position="1"/>
        <end position="354"/>
    </location>
</feature>
<feature type="domain" description="Phosphagen kinase C-terminal" evidence="1">
    <location>
        <begin position="24"/>
        <end position="254"/>
    </location>
</feature>
<feature type="short sequence motif" description="RDXXRA motif of the pArg binding pocket involved in allosteric regulation" evidence="1">
    <location>
        <begin position="337"/>
        <end position="342"/>
    </location>
</feature>
<feature type="binding site" evidence="1">
    <location>
        <begin position="27"/>
        <end position="31"/>
    </location>
    <ligand>
        <name>ATP</name>
        <dbReference type="ChEBI" id="CHEBI:30616"/>
    </ligand>
</feature>
<feature type="binding site" evidence="1">
    <location>
        <position position="92"/>
    </location>
    <ligand>
        <name>ATP</name>
        <dbReference type="ChEBI" id="CHEBI:30616"/>
    </ligand>
</feature>
<feature type="binding site" evidence="1">
    <location>
        <position position="125"/>
    </location>
    <ligand>
        <name>ATP</name>
        <dbReference type="ChEBI" id="CHEBI:30616"/>
    </ligand>
</feature>
<feature type="binding site" evidence="1">
    <location>
        <begin position="176"/>
        <end position="180"/>
    </location>
    <ligand>
        <name>ATP</name>
        <dbReference type="ChEBI" id="CHEBI:30616"/>
    </ligand>
</feature>
<feature type="binding site" evidence="1">
    <location>
        <begin position="207"/>
        <end position="212"/>
    </location>
    <ligand>
        <name>ATP</name>
        <dbReference type="ChEBI" id="CHEBI:30616"/>
    </ligand>
</feature>
<sequence length="354" mass="40035">MSLDKIMNEAISPWMKGDGPDSDIVLSSRIRLARNFKKYQFSTMQNEEETKQIQELFKKEFINKTVEPFGEFELLKMNELTPLQRRVLVEKHLISPNLAGTEYGACLLSESEHISVMLNEEDHIRIQCLFSGLQLSEALQSANQIDNWIEKEVEYAFDESLGYITSCPTNVGTGLRASVMIHLPGLVLTKRISRIIQVIQKLGLVVRGIYGEGSEALGNIFQVSNQMTLGKSEEDIIADLKSVIQQIIQQEKMARELIVQNSSIELEDKVYRSYGILANSRLIQSAEAANCLSDLRLGIDLGYIQGISRNILTELMVLTQPGILQQYAGGPLGPEERDYRRATLIRERLRIEKN</sequence>